<evidence type="ECO:0000256" key="1">
    <source>
        <dbReference type="SAM" id="MobiDB-lite"/>
    </source>
</evidence>
<name>YR627_MIMIV</name>
<dbReference type="EMBL" id="AY653733">
    <property type="protein sequence ID" value="AAV50888.1"/>
    <property type="molecule type" value="Genomic_DNA"/>
</dbReference>
<dbReference type="KEGG" id="vg:9925269"/>
<dbReference type="Proteomes" id="UP000001134">
    <property type="component" value="Genome"/>
</dbReference>
<sequence>MNVTKLNLNAPSQGDPKELQTHFIVNKNKSQYVKFPSLQDRNAVDSFHEFLCKYNVWKTTDRVILTEKSFKYEPSSCFSDISFMITFYDIFCRAKEESIKKQKEQINIVKPNNYPTGFQHVHVSQQIQHDQHPQYNKHPQNNHHPQNTQHSQNNPIDKNINESENKEDLSDRSSDSANSEESHNSQYSQDSGDSRNYQDSEDNKGNIPTGKKTEQNKLIVQRLTNPKITPDTINDSNKDSNKDLNKDLSKNQSGESIKDKSKGPSKNLSKDSSKNKSKETSGSNLPDKISEDGDDLDDLGNDIDNFMDSSDYEDSDQDAISENPSDFDEDDSDDDDSNTEILEQILEISDNEHMELSSDLLEELNKKSPSNSKKSKTNQKLSQSSKKISSKTITNSGSKSQKQEPSTFSVKLKGKVSNGKTNKKTGKNIEESDWENSQSDSDHSESSDDSDNESDNESDNESNNDSDNETDSEIDDDKNNATPNIKLIKKSKKLSPKTPMKPNNKTTSVSKPVSKPPVKSSIKNNTKNNKPVPKPIKNPKKLSKQKDQSESQSDKDIDTDSENLPVSKKPPTNKSQVPKRPVGRPPKSVSLPSSPKKPKRNIGGSKTAKTQNKSKSQPKTNGSKTSTKSIPGSKAVGKKKPTKK</sequence>
<organism>
    <name type="scientific">Acanthamoeba polyphaga mimivirus</name>
    <name type="common">APMV</name>
    <dbReference type="NCBI Taxonomy" id="212035"/>
    <lineage>
        <taxon>Viruses</taxon>
        <taxon>Varidnaviria</taxon>
        <taxon>Bamfordvirae</taxon>
        <taxon>Nucleocytoviricota</taxon>
        <taxon>Megaviricetes</taxon>
        <taxon>Imitervirales</taxon>
        <taxon>Mimiviridae</taxon>
        <taxon>Megamimivirinae</taxon>
        <taxon>Mimivirus</taxon>
        <taxon>Mimivirus bradfordmassiliense</taxon>
    </lineage>
</organism>
<keyword id="KW-1185">Reference proteome</keyword>
<reference key="1">
    <citation type="journal article" date="2004" name="Science">
        <title>The 1.2-megabase genome sequence of Mimivirus.</title>
        <authorList>
            <person name="Raoult D."/>
            <person name="Audic S."/>
            <person name="Robert C."/>
            <person name="Abergel C."/>
            <person name="Renesto P."/>
            <person name="Ogata H."/>
            <person name="La Scola B."/>
            <person name="Susan M."/>
            <person name="Claverie J.-M."/>
        </authorList>
    </citation>
    <scope>NUCLEOTIDE SEQUENCE [LARGE SCALE GENOMIC DNA]</scope>
    <source>
        <strain>Rowbotham-Bradford</strain>
    </source>
</reference>
<feature type="chain" id="PRO_0000253428" description="Uncharacterized protein R627">
    <location>
        <begin position="1"/>
        <end position="644"/>
    </location>
</feature>
<feature type="region of interest" description="Disordered" evidence="1">
    <location>
        <begin position="123"/>
        <end position="644"/>
    </location>
</feature>
<feature type="compositionally biased region" description="Low complexity" evidence="1">
    <location>
        <begin position="133"/>
        <end position="155"/>
    </location>
</feature>
<feature type="compositionally biased region" description="Basic and acidic residues" evidence="1">
    <location>
        <begin position="159"/>
        <end position="174"/>
    </location>
</feature>
<feature type="compositionally biased region" description="Polar residues" evidence="1">
    <location>
        <begin position="175"/>
        <end position="191"/>
    </location>
</feature>
<feature type="compositionally biased region" description="Basic and acidic residues" evidence="1">
    <location>
        <begin position="192"/>
        <end position="204"/>
    </location>
</feature>
<feature type="compositionally biased region" description="Polar residues" evidence="1">
    <location>
        <begin position="216"/>
        <end position="233"/>
    </location>
</feature>
<feature type="compositionally biased region" description="Basic and acidic residues" evidence="1">
    <location>
        <begin position="236"/>
        <end position="249"/>
    </location>
</feature>
<feature type="compositionally biased region" description="Basic and acidic residues" evidence="1">
    <location>
        <begin position="256"/>
        <end position="279"/>
    </location>
</feature>
<feature type="compositionally biased region" description="Acidic residues" evidence="1">
    <location>
        <begin position="292"/>
        <end position="301"/>
    </location>
</feature>
<feature type="compositionally biased region" description="Acidic residues" evidence="1">
    <location>
        <begin position="310"/>
        <end position="338"/>
    </location>
</feature>
<feature type="compositionally biased region" description="Low complexity" evidence="1">
    <location>
        <begin position="367"/>
        <end position="400"/>
    </location>
</feature>
<feature type="compositionally biased region" description="Acidic residues" evidence="1">
    <location>
        <begin position="447"/>
        <end position="476"/>
    </location>
</feature>
<feature type="compositionally biased region" description="Low complexity" evidence="1">
    <location>
        <begin position="496"/>
        <end position="531"/>
    </location>
</feature>
<feature type="compositionally biased region" description="Basic and acidic residues" evidence="1">
    <location>
        <begin position="544"/>
        <end position="558"/>
    </location>
</feature>
<feature type="compositionally biased region" description="Low complexity" evidence="1">
    <location>
        <begin position="585"/>
        <end position="594"/>
    </location>
</feature>
<feature type="compositionally biased region" description="Polar residues" evidence="1">
    <location>
        <begin position="607"/>
        <end position="630"/>
    </location>
</feature>
<accession>Q5UR75</accession>
<organismHost>
    <name type="scientific">Acanthamoeba polyphaga</name>
    <name type="common">Amoeba</name>
    <dbReference type="NCBI Taxonomy" id="5757"/>
</organismHost>
<protein>
    <recommendedName>
        <fullName>Uncharacterized protein R627</fullName>
    </recommendedName>
</protein>
<proteinExistence type="predicted"/>
<gene>
    <name type="ordered locus">MIMI_R627</name>
</gene>